<evidence type="ECO:0000250" key="1">
    <source>
        <dbReference type="UniProtKB" id="P18079"/>
    </source>
</evidence>
<evidence type="ECO:0000250" key="2">
    <source>
        <dbReference type="UniProtKB" id="P22557"/>
    </source>
</evidence>
<evidence type="ECO:0000269" key="3">
    <source>
    </source>
</evidence>
<evidence type="ECO:0000269" key="4">
    <source>
    </source>
</evidence>
<evidence type="ECO:0000269" key="5">
    <source>
    </source>
</evidence>
<evidence type="ECO:0000305" key="6"/>
<evidence type="ECO:0000305" key="7">
    <source>
    </source>
</evidence>
<evidence type="ECO:0007829" key="8">
    <source>
        <dbReference type="PDB" id="1H7D"/>
    </source>
</evidence>
<evidence type="ECO:0007829" key="9">
    <source>
        <dbReference type="PDB" id="1H7J"/>
    </source>
</evidence>
<sequence length="587" mass="64753">MVAAAMLLRSCPVLSQGPTGLLGKVAKTYQFLFSIGRCPILATQGPTCSQIHLKATKAGGDSPSWAKSHCPFMLSELQDRKSKIVQRAAPEVQEDVKTFKTDLLSTMDSTTRSHSFPSFQEPEQTEGAVPHLIQNNMTGSQAFGYDQFFRDKIMEKKQDHTYRVFKTVNRWANAYPFAQHFSEASMASKDVSVWCSNDYLGISRHPRVLQAIEETLKNHGAGAGGTRNISGTSKFHVELEQELAELHQKDSALLFSSCFVANDSTLFTLAKLLPGCEIYSDAGNHASMIQGIRNSGAAKFVFRHNDPGHLKKLLEKSDPKTPKIVAFETVHSMDGAICPLEELCDVAHQYGALTFVDEVHAVGLYGARGAGIGERDGIMHKLDIISGTLGKAFGCVGGYIASTRDLVDMVRSYAAGFIFTTSLPPMVLSGALESVRLLKGEEGQALRRAHQRNVKHMRQLLMDRGFPVIPCPSHIIPIRVGNAALNSKICDLLLSKHSIYVQAINYPTVPRGEELLRLAPSPHHSPQMMENFVEKLLLAWTEVGLPLQDVSVAACNFCHRPVHFELMSEWERSYFGNMGPQYVTTYA</sequence>
<keyword id="KW-0002">3D-structure</keyword>
<keyword id="KW-0012">Acyltransferase</keyword>
<keyword id="KW-0350">Heme biosynthesis</keyword>
<keyword id="KW-0472">Membrane</keyword>
<keyword id="KW-0496">Mitochondrion</keyword>
<keyword id="KW-0999">Mitochondrion inner membrane</keyword>
<keyword id="KW-0663">Pyridoxal phosphate</keyword>
<keyword id="KW-1185">Reference proteome</keyword>
<keyword id="KW-0808">Transferase</keyword>
<keyword id="KW-0809">Transit peptide</keyword>
<organism>
    <name type="scientific">Mus musculus</name>
    <name type="common">Mouse</name>
    <dbReference type="NCBI Taxonomy" id="10090"/>
    <lineage>
        <taxon>Eukaryota</taxon>
        <taxon>Metazoa</taxon>
        <taxon>Chordata</taxon>
        <taxon>Craniata</taxon>
        <taxon>Vertebrata</taxon>
        <taxon>Euteleostomi</taxon>
        <taxon>Mammalia</taxon>
        <taxon>Eutheria</taxon>
        <taxon>Euarchontoglires</taxon>
        <taxon>Glires</taxon>
        <taxon>Rodentia</taxon>
        <taxon>Myomorpha</taxon>
        <taxon>Muroidea</taxon>
        <taxon>Muridae</taxon>
        <taxon>Murinae</taxon>
        <taxon>Mus</taxon>
        <taxon>Mus</taxon>
    </lineage>
</organism>
<feature type="transit peptide" description="Mitochondrion" evidence="3">
    <location>
        <begin position="1"/>
        <end position="49"/>
    </location>
</feature>
<feature type="chain" id="PRO_0000001224" description="5-aminolevulinate synthase, erythroid-specific, mitochondrial">
    <location>
        <begin position="50"/>
        <end position="587"/>
    </location>
</feature>
<feature type="active site" evidence="1">
    <location>
        <position position="391"/>
    </location>
</feature>
<feature type="binding site" evidence="1">
    <location>
        <position position="163"/>
    </location>
    <ligand>
        <name>succinyl-CoA</name>
        <dbReference type="ChEBI" id="CHEBI:57292"/>
    </ligand>
</feature>
<feature type="binding site" description="in other chain" evidence="2">
    <location>
        <position position="258"/>
    </location>
    <ligand>
        <name>pyridoxal 5'-phosphate</name>
        <dbReference type="ChEBI" id="CHEBI:597326"/>
        <note>ligand shared between dimeric partners</note>
    </ligand>
</feature>
<feature type="binding site" description="in other chain" evidence="2">
    <location>
        <position position="259"/>
    </location>
    <ligand>
        <name>pyridoxal 5'-phosphate</name>
        <dbReference type="ChEBI" id="CHEBI:597326"/>
        <note>ligand shared between dimeric partners</note>
    </ligand>
</feature>
<feature type="binding site" evidence="1">
    <location>
        <position position="280"/>
    </location>
    <ligand>
        <name>succinyl-CoA</name>
        <dbReference type="ChEBI" id="CHEBI:57292"/>
    </ligand>
</feature>
<feature type="binding site" evidence="1">
    <location>
        <position position="299"/>
    </location>
    <ligand>
        <name>succinyl-CoA</name>
        <dbReference type="ChEBI" id="CHEBI:57292"/>
    </ligand>
</feature>
<feature type="binding site" description="in other chain" evidence="1">
    <location>
        <position position="332"/>
    </location>
    <ligand>
        <name>pyridoxal 5'-phosphate</name>
        <dbReference type="ChEBI" id="CHEBI:597326"/>
        <note>ligand shared between dimeric partners</note>
    </ligand>
</feature>
<feature type="binding site" description="in other chain" evidence="2">
    <location>
        <position position="360"/>
    </location>
    <ligand>
        <name>pyridoxal 5'-phosphate</name>
        <dbReference type="ChEBI" id="CHEBI:597326"/>
        <note>ligand shared between dimeric partners</note>
    </ligand>
</feature>
<feature type="binding site" description="in other chain" evidence="2">
    <location>
        <position position="388"/>
    </location>
    <ligand>
        <name>pyridoxal 5'-phosphate</name>
        <dbReference type="ChEBI" id="CHEBI:597326"/>
        <note>ligand shared between dimeric partners</note>
    </ligand>
</feature>
<feature type="binding site" evidence="2">
    <location>
        <position position="420"/>
    </location>
    <ligand>
        <name>pyridoxal 5'-phosphate</name>
        <dbReference type="ChEBI" id="CHEBI:597326"/>
        <note>ligand shared between dimeric partners</note>
    </ligand>
</feature>
<feature type="binding site" evidence="2">
    <location>
        <position position="421"/>
    </location>
    <ligand>
        <name>pyridoxal 5'-phosphate</name>
        <dbReference type="ChEBI" id="CHEBI:597326"/>
        <note>ligand shared between dimeric partners</note>
    </ligand>
</feature>
<feature type="binding site" evidence="1">
    <location>
        <position position="508"/>
    </location>
    <ligand>
        <name>succinyl-CoA</name>
        <dbReference type="ChEBI" id="CHEBI:57292"/>
    </ligand>
</feature>
<feature type="modified residue" description="N6-(pyridoxal phosphate)lysine" evidence="5">
    <location>
        <position position="391"/>
    </location>
</feature>
<feature type="mutagenesis site" description="Abolishes enzyme activity." evidence="5">
    <original>K</original>
    <variation>A</variation>
    <variation>H</variation>
    <location>
        <position position="391"/>
    </location>
</feature>
<feature type="sequence conflict" description="In Ref. 1; AAA37207." evidence="6" ref="1">
    <location>
        <begin position="61"/>
        <end position="75"/>
    </location>
</feature>
<feature type="sequence conflict" description="In Ref. 3; BAB22254." evidence="6" ref="3">
    <original>A</original>
    <variation>R</variation>
    <location>
        <position position="66"/>
    </location>
</feature>
<feature type="sequence conflict" description="In Ref. 2; AAA91866." evidence="6" ref="2">
    <original>W</original>
    <variation>R</variation>
    <location>
        <position position="171"/>
    </location>
</feature>
<feature type="sequence conflict" description="In Ref. 2; AAA91866." evidence="6" ref="2">
    <original>C</original>
    <variation>V</variation>
    <location>
        <position position="338"/>
    </location>
</feature>
<feature type="sequence conflict" description="In Ref. 2; AAA91866." evidence="6" ref="2">
    <original>RGAGI</original>
    <variation>GVQVS</variation>
    <location>
        <begin position="368"/>
        <end position="372"/>
    </location>
</feature>
<feature type="sequence conflict" description="In Ref. 1; AAA37207." evidence="6" ref="1">
    <original>V</original>
    <variation>M</variation>
    <location>
        <position position="427"/>
    </location>
</feature>
<feature type="sequence conflict" description="In Ref. 2; AAA91866." evidence="6" ref="2">
    <original>R</original>
    <variation>W</variation>
    <location>
        <position position="479"/>
    </location>
</feature>
<feature type="turn" evidence="9">
    <location>
        <begin position="5"/>
        <end position="8"/>
    </location>
</feature>
<feature type="strand" evidence="9">
    <location>
        <begin position="14"/>
        <end position="16"/>
    </location>
</feature>
<feature type="turn" evidence="8">
    <location>
        <begin position="23"/>
        <end position="27"/>
    </location>
</feature>
<feature type="helix" evidence="8">
    <location>
        <begin position="28"/>
        <end position="32"/>
    </location>
</feature>
<protein>
    <recommendedName>
        <fullName>5-aminolevulinate synthase, erythroid-specific, mitochondrial</fullName>
        <shortName>ALAS-E</shortName>
        <ecNumber evidence="4 5">2.3.1.37</ecNumber>
    </recommendedName>
    <alternativeName>
        <fullName>5-aminolevulinic acid synthase 2</fullName>
    </alternativeName>
    <alternativeName>
        <fullName>Delta-ALA synthase 2</fullName>
    </alternativeName>
    <alternativeName>
        <fullName>Delta-aminolevulinate synthase 2</fullName>
    </alternativeName>
</protein>
<proteinExistence type="evidence at protein level"/>
<dbReference type="EC" id="2.3.1.37" evidence="4 5"/>
<dbReference type="EMBL" id="M15268">
    <property type="protein sequence ID" value="AAA37207.1"/>
    <property type="status" value="ALT_INIT"/>
    <property type="molecule type" value="mRNA"/>
</dbReference>
<dbReference type="EMBL" id="M63244">
    <property type="protein sequence ID" value="AAA91866.1"/>
    <property type="molecule type" value="mRNA"/>
</dbReference>
<dbReference type="EMBL" id="AK002642">
    <property type="protein sequence ID" value="BAB22254.1"/>
    <property type="molecule type" value="mRNA"/>
</dbReference>
<dbReference type="EMBL" id="AK077610">
    <property type="protein sequence ID" value="BAC36898.1"/>
    <property type="molecule type" value="mRNA"/>
</dbReference>
<dbReference type="CCDS" id="CCDS41173.1"/>
<dbReference type="PIR" id="A29040">
    <property type="entry name" value="SYMSAL"/>
</dbReference>
<dbReference type="RefSeq" id="NP_001095916.1">
    <property type="nucleotide sequence ID" value="NM_001102446.1"/>
</dbReference>
<dbReference type="RefSeq" id="NP_033783.1">
    <property type="nucleotide sequence ID" value="NM_009653.4"/>
</dbReference>
<dbReference type="PDB" id="1H7D">
    <property type="method" value="NMR"/>
    <property type="chains" value="A=1-49"/>
</dbReference>
<dbReference type="PDB" id="1H7J">
    <property type="method" value="NMR"/>
    <property type="chains" value="A=1-26"/>
</dbReference>
<dbReference type="PDBsum" id="1H7D"/>
<dbReference type="PDBsum" id="1H7J"/>
<dbReference type="SMR" id="P08680"/>
<dbReference type="BioGRID" id="198059">
    <property type="interactions" value="3"/>
</dbReference>
<dbReference type="FunCoup" id="P08680">
    <property type="interactions" value="827"/>
</dbReference>
<dbReference type="IntAct" id="P08680">
    <property type="interactions" value="4"/>
</dbReference>
<dbReference type="STRING" id="10090.ENSMUSP00000066040"/>
<dbReference type="GlyGen" id="P08680">
    <property type="glycosylation" value="1 site"/>
</dbReference>
<dbReference type="iPTMnet" id="P08680"/>
<dbReference type="PhosphoSitePlus" id="P08680"/>
<dbReference type="PaxDb" id="10090-ENSMUSP00000066040"/>
<dbReference type="ProteomicsDB" id="269586"/>
<dbReference type="Antibodypedia" id="457">
    <property type="antibodies" value="312 antibodies from 32 providers"/>
</dbReference>
<dbReference type="DNASU" id="11656"/>
<dbReference type="Ensembl" id="ENSMUST00000066337.13">
    <property type="protein sequence ID" value="ENSMUSP00000066040.7"/>
    <property type="gene ID" value="ENSMUSG00000025270.14"/>
</dbReference>
<dbReference type="GeneID" id="11656"/>
<dbReference type="KEGG" id="mmu:11656"/>
<dbReference type="UCSC" id="uc009uoj.1">
    <property type="organism name" value="mouse"/>
</dbReference>
<dbReference type="AGR" id="MGI:87990"/>
<dbReference type="CTD" id="212"/>
<dbReference type="MGI" id="MGI:87990">
    <property type="gene designation" value="Alas2"/>
</dbReference>
<dbReference type="VEuPathDB" id="HostDB:ENSMUSG00000025270"/>
<dbReference type="eggNOG" id="KOG1360">
    <property type="taxonomic scope" value="Eukaryota"/>
</dbReference>
<dbReference type="GeneTree" id="ENSGT00940000159912"/>
<dbReference type="InParanoid" id="P08680"/>
<dbReference type="OMA" id="DQFFRNK"/>
<dbReference type="OrthoDB" id="10263824at2759"/>
<dbReference type="PhylomeDB" id="P08680"/>
<dbReference type="TreeFam" id="TF300724"/>
<dbReference type="BRENDA" id="2.3.1.37">
    <property type="organism ID" value="3474"/>
</dbReference>
<dbReference type="Reactome" id="R-MMU-189451">
    <property type="pathway name" value="Heme biosynthesis"/>
</dbReference>
<dbReference type="UniPathway" id="UPA00251">
    <property type="reaction ID" value="UER00375"/>
</dbReference>
<dbReference type="BioGRID-ORCS" id="11656">
    <property type="hits" value="2 hits in 77 CRISPR screens"/>
</dbReference>
<dbReference type="EvolutionaryTrace" id="P08680"/>
<dbReference type="PRO" id="PR:P08680"/>
<dbReference type="Proteomes" id="UP000000589">
    <property type="component" value="Chromosome X"/>
</dbReference>
<dbReference type="RNAct" id="P08680">
    <property type="molecule type" value="protein"/>
</dbReference>
<dbReference type="Bgee" id="ENSMUSG00000025270">
    <property type="expression patterns" value="Expressed in blood and 172 other cell types or tissues"/>
</dbReference>
<dbReference type="ExpressionAtlas" id="P08680">
    <property type="expression patterns" value="baseline and differential"/>
</dbReference>
<dbReference type="GO" id="GO:0005743">
    <property type="term" value="C:mitochondrial inner membrane"/>
    <property type="evidence" value="ECO:0000250"/>
    <property type="project" value="UniProtKB"/>
</dbReference>
<dbReference type="GO" id="GO:0005759">
    <property type="term" value="C:mitochondrial matrix"/>
    <property type="evidence" value="ECO:0007669"/>
    <property type="project" value="InterPro"/>
</dbReference>
<dbReference type="GO" id="GO:0005739">
    <property type="term" value="C:mitochondrion"/>
    <property type="evidence" value="ECO:0000314"/>
    <property type="project" value="UniProtKB"/>
</dbReference>
<dbReference type="GO" id="GO:0003870">
    <property type="term" value="F:5-aminolevulinate synthase activity"/>
    <property type="evidence" value="ECO:0000314"/>
    <property type="project" value="UniProtKB"/>
</dbReference>
<dbReference type="GO" id="GO:0030170">
    <property type="term" value="F:pyridoxal phosphate binding"/>
    <property type="evidence" value="ECO:0007669"/>
    <property type="project" value="InterPro"/>
</dbReference>
<dbReference type="GO" id="GO:0030218">
    <property type="term" value="P:erythrocyte differentiation"/>
    <property type="evidence" value="ECO:0000315"/>
    <property type="project" value="UniProtKB"/>
</dbReference>
<dbReference type="GO" id="GO:0006785">
    <property type="term" value="P:heme B biosynthetic process"/>
    <property type="evidence" value="ECO:0007669"/>
    <property type="project" value="Ensembl"/>
</dbReference>
<dbReference type="GO" id="GO:0006783">
    <property type="term" value="P:heme biosynthetic process"/>
    <property type="evidence" value="ECO:0000315"/>
    <property type="project" value="UniProtKB"/>
</dbReference>
<dbReference type="GO" id="GO:0042541">
    <property type="term" value="P:hemoglobin biosynthetic process"/>
    <property type="evidence" value="ECO:0000315"/>
    <property type="project" value="UniProtKB"/>
</dbReference>
<dbReference type="GO" id="GO:0006879">
    <property type="term" value="P:intracellular iron ion homeostasis"/>
    <property type="evidence" value="ECO:0000315"/>
    <property type="project" value="MGI"/>
</dbReference>
<dbReference type="GO" id="GO:0006782">
    <property type="term" value="P:protoporphyrinogen IX biosynthetic process"/>
    <property type="evidence" value="ECO:0007669"/>
    <property type="project" value="UniProtKB-UniPathway"/>
</dbReference>
<dbReference type="GO" id="GO:0001666">
    <property type="term" value="P:response to hypoxia"/>
    <property type="evidence" value="ECO:0000250"/>
    <property type="project" value="UniProtKB"/>
</dbReference>
<dbReference type="CDD" id="cd06454">
    <property type="entry name" value="KBL_like"/>
    <property type="match status" value="1"/>
</dbReference>
<dbReference type="FunFam" id="3.90.1150.10:FF:000029">
    <property type="entry name" value="5-aminolevulinate synthase"/>
    <property type="match status" value="1"/>
</dbReference>
<dbReference type="FunFam" id="4.10.92.10:FF:000001">
    <property type="entry name" value="5-aminolevulinate synthase"/>
    <property type="match status" value="1"/>
</dbReference>
<dbReference type="FunFam" id="3.40.640.10:FF:000006">
    <property type="entry name" value="5-aminolevulinate synthase, mitochondrial"/>
    <property type="match status" value="1"/>
</dbReference>
<dbReference type="Gene3D" id="4.10.92.10">
    <property type="entry name" value="Aminolevulinic Acid Synthase 2"/>
    <property type="match status" value="1"/>
</dbReference>
<dbReference type="Gene3D" id="3.90.1150.10">
    <property type="entry name" value="Aspartate Aminotransferase, domain 1"/>
    <property type="match status" value="1"/>
</dbReference>
<dbReference type="Gene3D" id="3.40.640.10">
    <property type="entry name" value="Type I PLP-dependent aspartate aminotransferase-like (Major domain)"/>
    <property type="match status" value="1"/>
</dbReference>
<dbReference type="InterPro" id="IPR010961">
    <property type="entry name" value="4pyrrol_synth_NH2levulA_synth"/>
</dbReference>
<dbReference type="InterPro" id="IPR015118">
    <property type="entry name" value="5aminolev_synth_preseq"/>
</dbReference>
<dbReference type="InterPro" id="IPR001917">
    <property type="entry name" value="Aminotrans_II_pyridoxalP_BS"/>
</dbReference>
<dbReference type="InterPro" id="IPR004839">
    <property type="entry name" value="Aminotransferase_I/II_large"/>
</dbReference>
<dbReference type="InterPro" id="IPR050087">
    <property type="entry name" value="AON_synthase_class-II"/>
</dbReference>
<dbReference type="InterPro" id="IPR015424">
    <property type="entry name" value="PyrdxlP-dep_Trfase"/>
</dbReference>
<dbReference type="InterPro" id="IPR015421">
    <property type="entry name" value="PyrdxlP-dep_Trfase_major"/>
</dbReference>
<dbReference type="InterPro" id="IPR015422">
    <property type="entry name" value="PyrdxlP-dep_Trfase_small"/>
</dbReference>
<dbReference type="NCBIfam" id="TIGR01821">
    <property type="entry name" value="5aminolev_synth"/>
    <property type="match status" value="1"/>
</dbReference>
<dbReference type="PANTHER" id="PTHR13693:SF58">
    <property type="entry name" value="5-AMINOLEVULINATE SYNTHASE, ERYTHROID-SPECIFIC, MITOCHONDRIAL"/>
    <property type="match status" value="1"/>
</dbReference>
<dbReference type="PANTHER" id="PTHR13693">
    <property type="entry name" value="CLASS II AMINOTRANSFERASE/8-AMINO-7-OXONONANOATE SYNTHASE"/>
    <property type="match status" value="1"/>
</dbReference>
<dbReference type="Pfam" id="PF00155">
    <property type="entry name" value="Aminotran_1_2"/>
    <property type="match status" value="1"/>
</dbReference>
<dbReference type="Pfam" id="PF09029">
    <property type="entry name" value="Preseq_ALAS"/>
    <property type="match status" value="1"/>
</dbReference>
<dbReference type="SUPFAM" id="SSF53383">
    <property type="entry name" value="PLP-dependent transferases"/>
    <property type="match status" value="1"/>
</dbReference>
<dbReference type="PROSITE" id="PS00599">
    <property type="entry name" value="AA_TRANSFER_CLASS_2"/>
    <property type="match status" value="1"/>
</dbReference>
<comment type="function">
    <text evidence="2 4 5">Catalyzes the pyridoxal 5'-phosphate (PLP)-dependent condensation of succinyl-CoA and glycine to form aminolevulinic acid (ALA), with CoA and CO2 as by-products (PubMed:3557128, PubMed:8268805). Contributes significantly to heme formation during erythropoiesis (By similarity).</text>
</comment>
<comment type="catalytic activity">
    <reaction evidence="4 5">
        <text>succinyl-CoA + glycine + H(+) = 5-aminolevulinate + CO2 + CoA</text>
        <dbReference type="Rhea" id="RHEA:12921"/>
        <dbReference type="ChEBI" id="CHEBI:15378"/>
        <dbReference type="ChEBI" id="CHEBI:16526"/>
        <dbReference type="ChEBI" id="CHEBI:57287"/>
        <dbReference type="ChEBI" id="CHEBI:57292"/>
        <dbReference type="ChEBI" id="CHEBI:57305"/>
        <dbReference type="ChEBI" id="CHEBI:356416"/>
        <dbReference type="EC" id="2.3.1.37"/>
    </reaction>
    <physiologicalReaction direction="left-to-right" evidence="7">
        <dbReference type="Rhea" id="RHEA:12922"/>
    </physiologicalReaction>
</comment>
<comment type="cofactor">
    <cofactor evidence="2">
        <name>pyridoxal 5'-phosphate</name>
        <dbReference type="ChEBI" id="CHEBI:597326"/>
    </cofactor>
</comment>
<comment type="pathway">
    <text evidence="2">Porphyrin-containing compound metabolism; protoporphyrin-IX biosynthesis; 5-aminolevulinate from glycine: step 1/1.</text>
</comment>
<comment type="subunit">
    <text evidence="2">Homodimer. Interacts with SUCLA2.</text>
</comment>
<comment type="subcellular location">
    <subcellularLocation>
        <location evidence="2">Mitochondrion inner membrane</location>
        <topology evidence="2">Peripheral membrane protein</topology>
    </subcellularLocation>
    <subcellularLocation>
        <location evidence="4">Mitochondrion</location>
    </subcellularLocation>
    <text evidence="2">Localizes to the matrix side of the mitochondrion inner membrane.</text>
</comment>
<comment type="tissue specificity">
    <text evidence="4">Predomnantly expressed in erythroid cells.</text>
</comment>
<comment type="domain">
    <text evidence="2">C-terminus is a mobile self-inhibitory loop which interferes directly with active site.</text>
</comment>
<comment type="similarity">
    <text evidence="6">Belongs to the class-II pyridoxal-phosphate-dependent aminotransferase family.</text>
</comment>
<comment type="sequence caution" evidence="6">
    <conflict type="erroneous initiation">
        <sequence resource="EMBL-CDS" id="AAA37207"/>
    </conflict>
    <text>Extended N-terminus.</text>
</comment>
<gene>
    <name type="primary">Alas2</name>
</gene>
<name>HEM0_MOUSE</name>
<accession>P08680</accession>
<accession>Q64452</accession>
<accession>Q9DCN0</accession>
<reference key="1">
    <citation type="journal article" date="1986" name="Gene">
        <title>Nucleotide sequence of mouse 5-aminolevulinic acid synthase cDNA and expression of its gene in hepatic and erythroid tissues.</title>
        <authorList>
            <person name="Schoenhaut D.S."/>
            <person name="Curtis P.J."/>
        </authorList>
    </citation>
    <scope>NUCLEOTIDE SEQUENCE [MRNA]</scope>
    <scope>FUNCTION</scope>
    <scope>CATALYTIC ACTIVITY</scope>
    <scope>TISSUE SPECIFICITY</scope>
    <scope>SUBCELLULAR LOCATION</scope>
    <source>
        <tissue>Liver</tissue>
    </source>
</reference>
<reference key="2">
    <citation type="submission" date="1996-03" db="EMBL/GenBank/DDBJ databases">
        <title>Two genes encode Ala synthase in DBA/2 mouse: housekeeping and erythroid-specific.</title>
        <authorList>
            <person name="Young E.G."/>
            <person name="Dierks P.M."/>
        </authorList>
    </citation>
    <scope>NUCLEOTIDE SEQUENCE [MRNA]</scope>
    <source>
        <strain>DBA/2J</strain>
        <tissue>Erythroleukemia</tissue>
    </source>
</reference>
<reference key="3">
    <citation type="journal article" date="2005" name="Science">
        <title>The transcriptional landscape of the mammalian genome.</title>
        <authorList>
            <person name="Carninci P."/>
            <person name="Kasukawa T."/>
            <person name="Katayama S."/>
            <person name="Gough J."/>
            <person name="Frith M.C."/>
            <person name="Maeda N."/>
            <person name="Oyama R."/>
            <person name="Ravasi T."/>
            <person name="Lenhard B."/>
            <person name="Wells C."/>
            <person name="Kodzius R."/>
            <person name="Shimokawa K."/>
            <person name="Bajic V.B."/>
            <person name="Brenner S.E."/>
            <person name="Batalov S."/>
            <person name="Forrest A.R."/>
            <person name="Zavolan M."/>
            <person name="Davis M.J."/>
            <person name="Wilming L.G."/>
            <person name="Aidinis V."/>
            <person name="Allen J.E."/>
            <person name="Ambesi-Impiombato A."/>
            <person name="Apweiler R."/>
            <person name="Aturaliya R.N."/>
            <person name="Bailey T.L."/>
            <person name="Bansal M."/>
            <person name="Baxter L."/>
            <person name="Beisel K.W."/>
            <person name="Bersano T."/>
            <person name="Bono H."/>
            <person name="Chalk A.M."/>
            <person name="Chiu K.P."/>
            <person name="Choudhary V."/>
            <person name="Christoffels A."/>
            <person name="Clutterbuck D.R."/>
            <person name="Crowe M.L."/>
            <person name="Dalla E."/>
            <person name="Dalrymple B.P."/>
            <person name="de Bono B."/>
            <person name="Della Gatta G."/>
            <person name="di Bernardo D."/>
            <person name="Down T."/>
            <person name="Engstrom P."/>
            <person name="Fagiolini M."/>
            <person name="Faulkner G."/>
            <person name="Fletcher C.F."/>
            <person name="Fukushima T."/>
            <person name="Furuno M."/>
            <person name="Futaki S."/>
            <person name="Gariboldi M."/>
            <person name="Georgii-Hemming P."/>
            <person name="Gingeras T.R."/>
            <person name="Gojobori T."/>
            <person name="Green R.E."/>
            <person name="Gustincich S."/>
            <person name="Harbers M."/>
            <person name="Hayashi Y."/>
            <person name="Hensch T.K."/>
            <person name="Hirokawa N."/>
            <person name="Hill D."/>
            <person name="Huminiecki L."/>
            <person name="Iacono M."/>
            <person name="Ikeo K."/>
            <person name="Iwama A."/>
            <person name="Ishikawa T."/>
            <person name="Jakt M."/>
            <person name="Kanapin A."/>
            <person name="Katoh M."/>
            <person name="Kawasawa Y."/>
            <person name="Kelso J."/>
            <person name="Kitamura H."/>
            <person name="Kitano H."/>
            <person name="Kollias G."/>
            <person name="Krishnan S.P."/>
            <person name="Kruger A."/>
            <person name="Kummerfeld S.K."/>
            <person name="Kurochkin I.V."/>
            <person name="Lareau L.F."/>
            <person name="Lazarevic D."/>
            <person name="Lipovich L."/>
            <person name="Liu J."/>
            <person name="Liuni S."/>
            <person name="McWilliam S."/>
            <person name="Madan Babu M."/>
            <person name="Madera M."/>
            <person name="Marchionni L."/>
            <person name="Matsuda H."/>
            <person name="Matsuzawa S."/>
            <person name="Miki H."/>
            <person name="Mignone F."/>
            <person name="Miyake S."/>
            <person name="Morris K."/>
            <person name="Mottagui-Tabar S."/>
            <person name="Mulder N."/>
            <person name="Nakano N."/>
            <person name="Nakauchi H."/>
            <person name="Ng P."/>
            <person name="Nilsson R."/>
            <person name="Nishiguchi S."/>
            <person name="Nishikawa S."/>
            <person name="Nori F."/>
            <person name="Ohara O."/>
            <person name="Okazaki Y."/>
            <person name="Orlando V."/>
            <person name="Pang K.C."/>
            <person name="Pavan W.J."/>
            <person name="Pavesi G."/>
            <person name="Pesole G."/>
            <person name="Petrovsky N."/>
            <person name="Piazza S."/>
            <person name="Reed J."/>
            <person name="Reid J.F."/>
            <person name="Ring B.Z."/>
            <person name="Ringwald M."/>
            <person name="Rost B."/>
            <person name="Ruan Y."/>
            <person name="Salzberg S.L."/>
            <person name="Sandelin A."/>
            <person name="Schneider C."/>
            <person name="Schoenbach C."/>
            <person name="Sekiguchi K."/>
            <person name="Semple C.A."/>
            <person name="Seno S."/>
            <person name="Sessa L."/>
            <person name="Sheng Y."/>
            <person name="Shibata Y."/>
            <person name="Shimada H."/>
            <person name="Shimada K."/>
            <person name="Silva D."/>
            <person name="Sinclair B."/>
            <person name="Sperling S."/>
            <person name="Stupka E."/>
            <person name="Sugiura K."/>
            <person name="Sultana R."/>
            <person name="Takenaka Y."/>
            <person name="Taki K."/>
            <person name="Tammoja K."/>
            <person name="Tan S.L."/>
            <person name="Tang S."/>
            <person name="Taylor M.S."/>
            <person name="Tegner J."/>
            <person name="Teichmann S.A."/>
            <person name="Ueda H.R."/>
            <person name="van Nimwegen E."/>
            <person name="Verardo R."/>
            <person name="Wei C.L."/>
            <person name="Yagi K."/>
            <person name="Yamanishi H."/>
            <person name="Zabarovsky E."/>
            <person name="Zhu S."/>
            <person name="Zimmer A."/>
            <person name="Hide W."/>
            <person name="Bult C."/>
            <person name="Grimmond S.M."/>
            <person name="Teasdale R.D."/>
            <person name="Liu E.T."/>
            <person name="Brusic V."/>
            <person name="Quackenbush J."/>
            <person name="Wahlestedt C."/>
            <person name="Mattick J.S."/>
            <person name="Hume D.A."/>
            <person name="Kai C."/>
            <person name="Sasaki D."/>
            <person name="Tomaru Y."/>
            <person name="Fukuda S."/>
            <person name="Kanamori-Katayama M."/>
            <person name="Suzuki M."/>
            <person name="Aoki J."/>
            <person name="Arakawa T."/>
            <person name="Iida J."/>
            <person name="Imamura K."/>
            <person name="Itoh M."/>
            <person name="Kato T."/>
            <person name="Kawaji H."/>
            <person name="Kawagashira N."/>
            <person name="Kawashima T."/>
            <person name="Kojima M."/>
            <person name="Kondo S."/>
            <person name="Konno H."/>
            <person name="Nakano K."/>
            <person name="Ninomiya N."/>
            <person name="Nishio T."/>
            <person name="Okada M."/>
            <person name="Plessy C."/>
            <person name="Shibata K."/>
            <person name="Shiraki T."/>
            <person name="Suzuki S."/>
            <person name="Tagami M."/>
            <person name="Waki K."/>
            <person name="Watahiki A."/>
            <person name="Okamura-Oho Y."/>
            <person name="Suzuki H."/>
            <person name="Kawai J."/>
            <person name="Hayashizaki Y."/>
        </authorList>
    </citation>
    <scope>NUCLEOTIDE SEQUENCE [LARGE SCALE MRNA]</scope>
    <source>
        <strain>C57BL/6J</strain>
        <tissue>Kidney</tissue>
    </source>
</reference>
<reference key="4">
    <citation type="journal article" date="1993" name="Protein Sci.">
        <title>Heme biosynthesis in mammalian systems: evidence of a Schiff base linkage between the pyridoxal 5'-phosphate cofactor and a lysine residue in 5-aminolevulinate synthase.</title>
        <authorList>
            <person name="Ferreira G.C."/>
            <person name="Neame P.J."/>
            <person name="Dailey H.A."/>
        </authorList>
    </citation>
    <scope>FUNCTION</scope>
    <scope>CATALYTIC ACTIVITY</scope>
    <scope>PYRIDOXAL PHOSPHATE AT LYS-391</scope>
    <scope>MUTAGENESIS OF LYS-391</scope>
</reference>
<reference key="5">
    <citation type="journal article" date="2010" name="Cell">
        <title>A tissue-specific atlas of mouse protein phosphorylation and expression.</title>
        <authorList>
            <person name="Huttlin E.L."/>
            <person name="Jedrychowski M.P."/>
            <person name="Elias J.E."/>
            <person name="Goswami T."/>
            <person name="Rad R."/>
            <person name="Beausoleil S.A."/>
            <person name="Villen J."/>
            <person name="Haas W."/>
            <person name="Sowa M.E."/>
            <person name="Gygi S.P."/>
        </authorList>
    </citation>
    <scope>IDENTIFICATION BY MASS SPECTROMETRY [LARGE SCALE ANALYSIS]</scope>
    <source>
        <tissue>Spleen</tissue>
    </source>
</reference>
<reference key="6">
    <citation type="journal article" date="2001" name="FEBS Lett.">
        <title>The solution structure and heme binding of the presequence of murine 5-aminolevulinate synthase.</title>
        <authorList>
            <person name="Goodfellow B.J."/>
            <person name="Dias J.S."/>
            <person name="Ferreira G.C."/>
            <person name="Henklein P."/>
            <person name="Wray V."/>
            <person name="Macedo A.L."/>
        </authorList>
    </citation>
    <scope>STRUCTURE BY NMR OF 1-49</scope>
    <scope>TRANSIT PEPTIDE CLEAVAGE SITE</scope>
</reference>